<proteinExistence type="evidence at protein level"/>
<name>CAPSD_POPMV</name>
<feature type="chain" id="PRO_0000222639" description="Capsid protein">
    <location>
        <begin position="1"/>
        <end position="321"/>
    </location>
</feature>
<feature type="region of interest" description="Disordered" evidence="1">
    <location>
        <begin position="1"/>
        <end position="43"/>
    </location>
</feature>
<feature type="compositionally biased region" description="Basic and acidic residues" evidence="1">
    <location>
        <begin position="9"/>
        <end position="39"/>
    </location>
</feature>
<organism>
    <name type="scientific">Poplar mosaic virus (isolate ATCC Pv275)</name>
    <name type="common">PMV</name>
    <dbReference type="NCBI Taxonomy" id="31709"/>
    <lineage>
        <taxon>Viruses</taxon>
        <taxon>Riboviria</taxon>
        <taxon>Orthornavirae</taxon>
        <taxon>Kitrinoviricota</taxon>
        <taxon>Alsuviricetes</taxon>
        <taxon>Tymovirales</taxon>
        <taxon>Betaflexiviridae</taxon>
        <taxon>Quinvirinae</taxon>
        <taxon>Carlavirus</taxon>
        <taxon>Poplar mosaic virus</taxon>
    </lineage>
</organism>
<reference key="1">
    <citation type="journal article" date="1992" name="J. Gen. Virol.">
        <title>Partial nucleotide sequence of poplar mosaic virus RNA confirms its classification as a carlavirus.</title>
        <authorList>
            <person name="Henderson J."/>
            <person name="Gibbs M.J."/>
            <person name="Edwards M.-L."/>
            <person name="Clarke V.A."/>
            <person name="Gardner K.A."/>
            <person name="Cooper J.I."/>
        </authorList>
    </citation>
    <scope>NUCLEOTIDE SEQUENCE [GENOMIC RNA]</scope>
    <scope>PROTEIN SEQUENCE OF 59-70; 80-90; 269-278 AND 293-303</scope>
</reference>
<reference key="2">
    <citation type="journal article" date="2005" name="J. Virol. Methods">
        <title>Construction and properties of a gene-silencing vector based on Poplar mosaic virus (genus Carlavirus).</title>
        <authorList>
            <person name="Naylor M."/>
            <person name="Reeves J."/>
            <person name="Cooper J.I."/>
            <person name="Edwards M.-L."/>
            <person name="Wang H."/>
        </authorList>
    </citation>
    <scope>SEQUENCE REVISION TO 208-240 AND 304</scope>
</reference>
<reference key="3">
    <citation type="journal article" date="2005" name="Mol. Plant Microbe Interact.">
        <title>A new cell-to-cell transport model for Potexviruses.</title>
        <authorList>
            <person name="Verchot-Lubicz J."/>
        </authorList>
    </citation>
    <scope>REVIEW</scope>
</reference>
<organismHost>
    <name type="scientific">Populus balsamifera</name>
    <name type="common">Balsam poplar</name>
    <dbReference type="NCBI Taxonomy" id="73824"/>
</organismHost>
<organismHost>
    <name type="scientific">Populus deltoides</name>
    <name type="common">Eastern poplar</name>
    <name type="synonym">Eastern cottonwood</name>
    <dbReference type="NCBI Taxonomy" id="3696"/>
</organismHost>
<organismHost>
    <name type="scientific">Populus maximowiczii</name>
    <name type="common">Japanese poplar</name>
    <dbReference type="NCBI Taxonomy" id="75703"/>
</organismHost>
<organismHost>
    <name type="scientific">Populus nigra</name>
    <name type="common">Lombardy poplar</name>
    <dbReference type="NCBI Taxonomy" id="3691"/>
</organismHost>
<organismHost>
    <name type="scientific">Populus trichocarpa</name>
    <name type="common">Western balsam poplar</name>
    <name type="synonym">Populus balsamifera subsp. trichocarpa</name>
    <dbReference type="NCBI Taxonomy" id="3694"/>
</organismHost>
<protein>
    <recommendedName>
        <fullName>Capsid protein</fullName>
    </recommendedName>
    <alternativeName>
        <fullName>Coat protein</fullName>
        <shortName>CP</shortName>
    </alternativeName>
</protein>
<dbReference type="EMBL" id="X65102">
    <property type="protein sequence ID" value="CAA46226.2"/>
    <property type="molecule type" value="Genomic_RNA"/>
</dbReference>
<dbReference type="PIR" id="JQ1645">
    <property type="entry name" value="JQ1645"/>
</dbReference>
<dbReference type="SMR" id="Q02106"/>
<dbReference type="GO" id="GO:0019029">
    <property type="term" value="C:helical viral capsid"/>
    <property type="evidence" value="ECO:0007669"/>
    <property type="project" value="UniProtKB-KW"/>
</dbReference>
<dbReference type="GO" id="GO:1990904">
    <property type="term" value="C:ribonucleoprotein complex"/>
    <property type="evidence" value="ECO:0007669"/>
    <property type="project" value="UniProtKB-KW"/>
</dbReference>
<dbReference type="GO" id="GO:0005198">
    <property type="term" value="F:structural molecule activity"/>
    <property type="evidence" value="ECO:0007669"/>
    <property type="project" value="InterPro"/>
</dbReference>
<dbReference type="InterPro" id="IPR013569">
    <property type="entry name" value="Carlavirus_coat_N"/>
</dbReference>
<dbReference type="InterPro" id="IPR000052">
    <property type="entry name" value="Pltvir_coat"/>
</dbReference>
<dbReference type="Pfam" id="PF00286">
    <property type="entry name" value="Flexi_CP"/>
    <property type="match status" value="1"/>
</dbReference>
<dbReference type="Pfam" id="PF08358">
    <property type="entry name" value="Flexi_CP_N"/>
    <property type="match status" value="1"/>
</dbReference>
<dbReference type="PRINTS" id="PR00232">
    <property type="entry name" value="POTXCARLCOAT"/>
</dbReference>
<dbReference type="PROSITE" id="PS00418">
    <property type="entry name" value="POTEX_CARLAVIRUS_COAT"/>
    <property type="match status" value="1"/>
</dbReference>
<keyword id="KW-0167">Capsid protein</keyword>
<keyword id="KW-0903">Direct protein sequencing</keyword>
<keyword id="KW-1139">Helical capsid protein</keyword>
<keyword id="KW-0687">Ribonucleoprotein</keyword>
<keyword id="KW-0946">Virion</keyword>
<sequence length="321" mass="36111">MSGEQTEQISKDKAVAAEQARKEQIAEGKKAAESPEVERRKKNIAEIAKLNEKAREAKKQATEQEETTTSLLERFNLLKEWHLNQQVNNKVKNPAMESETEPALADELKPDMSNLFARPTVTDLQKMKWNAESNKMATADDMAFIEAEFQSLGVPKENLAKVMWTLTRYCVGASSSQYLDPKGEEEKLCGGVTRAALIACIKKRSTLRKVCRLYAPIVWNYMLVNNVPPEDWQSKGYTEETKFAAFDTFDFVMNPAAIQPLEGLIRSPTKAEIIANETHKRIALDRNANNERFANLGSEITGGKFGCRVGTKWRESKCDNG</sequence>
<evidence type="ECO:0000256" key="1">
    <source>
        <dbReference type="SAM" id="MobiDB-lite"/>
    </source>
</evidence>
<evidence type="ECO:0000305" key="2"/>
<accession>Q02106</accession>
<comment type="function">
    <text>Required for genome encapsidation. Forms ribonucleoprotein complexes along with TGB1 helicase and viral RNA.</text>
</comment>
<comment type="subcellular location">
    <subcellularLocation>
        <location evidence="2">Virion</location>
    </subcellularLocation>
</comment>
<comment type="similarity">
    <text evidence="2">Belongs to the potexviruses coat protein family.</text>
</comment>